<evidence type="ECO:0000250" key="1">
    <source>
        <dbReference type="UniProtKB" id="P20107"/>
    </source>
</evidence>
<evidence type="ECO:0000255" key="2"/>
<evidence type="ECO:0000256" key="3">
    <source>
        <dbReference type="SAM" id="MobiDB-lite"/>
    </source>
</evidence>
<evidence type="ECO:0000269" key="4">
    <source>
    </source>
</evidence>
<evidence type="ECO:0000269" key="5">
    <source>
    </source>
</evidence>
<evidence type="ECO:0000269" key="6">
    <source>
    </source>
</evidence>
<evidence type="ECO:0000269" key="7">
    <source>
    </source>
</evidence>
<evidence type="ECO:0000269" key="8">
    <source>
    </source>
</evidence>
<evidence type="ECO:0000269" key="9">
    <source>
    </source>
</evidence>
<evidence type="ECO:0000269" key="10">
    <source>
    </source>
</evidence>
<evidence type="ECO:0000269" key="11">
    <source>
    </source>
</evidence>
<evidence type="ECO:0000269" key="12">
    <source>
    </source>
</evidence>
<evidence type="ECO:0000269" key="13">
    <source>
    </source>
</evidence>
<evidence type="ECO:0000303" key="14">
    <source>
    </source>
</evidence>
<evidence type="ECO:0000303" key="15">
    <source>
    </source>
</evidence>
<evidence type="ECO:0000305" key="16"/>
<evidence type="ECO:0000305" key="17">
    <source>
    </source>
</evidence>
<evidence type="ECO:0007744" key="18">
    <source>
    </source>
</evidence>
<organism>
    <name type="scientific">Saccharomyces cerevisiae (strain ATCC 204508 / S288c)</name>
    <name type="common">Baker's yeast</name>
    <dbReference type="NCBI Taxonomy" id="559292"/>
    <lineage>
        <taxon>Eukaryota</taxon>
        <taxon>Fungi</taxon>
        <taxon>Dikarya</taxon>
        <taxon>Ascomycota</taxon>
        <taxon>Saccharomycotina</taxon>
        <taxon>Saccharomycetes</taxon>
        <taxon>Saccharomycetales</taxon>
        <taxon>Saccharomycetaceae</taxon>
        <taxon>Saccharomyces</taxon>
    </lineage>
</organism>
<proteinExistence type="evidence at protein level"/>
<name>COT1_YEAST</name>
<protein>
    <recommendedName>
        <fullName evidence="15">Vacuolar zinc transporter COT1</fullName>
    </recommendedName>
    <alternativeName>
        <fullName evidence="14">Cobalt toxicity protein 1</fullName>
    </alternativeName>
</protein>
<reference key="1">
    <citation type="journal article" date="1992" name="Mol. Cell. Biol.">
        <title>COT1, a gene involved in cobalt accumulation in Saccharomyces cerevisiae.</title>
        <authorList>
            <person name="Conklin D.S."/>
            <person name="McMaster J.A."/>
            <person name="Culbertson M.R."/>
            <person name="Kung C."/>
        </authorList>
    </citation>
    <scope>NUCLEOTIDE SEQUENCE [GENOMIC DNA]</scope>
    <scope>FUNCTION</scope>
</reference>
<reference key="2">
    <citation type="journal article" date="1996" name="Yeast">
        <title>Sequencing of a 35.71 kb DNA segment on the right arm of yeast chromosome XV reveals regions of similarity to chromosomes I and XIII.</title>
        <authorList>
            <person name="Pearson B.M."/>
            <person name="Hernando Y."/>
            <person name="Payne J."/>
            <person name="Wolf S.S."/>
            <person name="Kalogeropoulos A."/>
            <person name="Schweizer M."/>
        </authorList>
    </citation>
    <scope>NUCLEOTIDE SEQUENCE [GENOMIC DNA]</scope>
    <source>
        <strain>ATCC 96604 / S288c / FY1679</strain>
    </source>
</reference>
<reference key="3">
    <citation type="journal article" date="1997" name="Nature">
        <title>The nucleotide sequence of Saccharomyces cerevisiae chromosome XV.</title>
        <authorList>
            <person name="Dujon B."/>
            <person name="Albermann K."/>
            <person name="Aldea M."/>
            <person name="Alexandraki D."/>
            <person name="Ansorge W."/>
            <person name="Arino J."/>
            <person name="Benes V."/>
            <person name="Bohn C."/>
            <person name="Bolotin-Fukuhara M."/>
            <person name="Bordonne R."/>
            <person name="Boyer J."/>
            <person name="Camasses A."/>
            <person name="Casamayor A."/>
            <person name="Casas C."/>
            <person name="Cheret G."/>
            <person name="Cziepluch C."/>
            <person name="Daignan-Fornier B."/>
            <person name="Dang V.-D."/>
            <person name="de Haan M."/>
            <person name="Delius H."/>
            <person name="Durand P."/>
            <person name="Fairhead C."/>
            <person name="Feldmann H."/>
            <person name="Gaillon L."/>
            <person name="Galisson F."/>
            <person name="Gamo F.-J."/>
            <person name="Gancedo C."/>
            <person name="Goffeau A."/>
            <person name="Goulding S.E."/>
            <person name="Grivell L.A."/>
            <person name="Habbig B."/>
            <person name="Hand N.J."/>
            <person name="Hani J."/>
            <person name="Hattenhorst U."/>
            <person name="Hebling U."/>
            <person name="Hernando Y."/>
            <person name="Herrero E."/>
            <person name="Heumann K."/>
            <person name="Hiesel R."/>
            <person name="Hilger F."/>
            <person name="Hofmann B."/>
            <person name="Hollenberg C.P."/>
            <person name="Hughes B."/>
            <person name="Jauniaux J.-C."/>
            <person name="Kalogeropoulos A."/>
            <person name="Katsoulou C."/>
            <person name="Kordes E."/>
            <person name="Lafuente M.J."/>
            <person name="Landt O."/>
            <person name="Louis E.J."/>
            <person name="Maarse A.C."/>
            <person name="Madania A."/>
            <person name="Mannhaupt G."/>
            <person name="Marck C."/>
            <person name="Martin R.P."/>
            <person name="Mewes H.-W."/>
            <person name="Michaux G."/>
            <person name="Paces V."/>
            <person name="Parle-McDermott A.G."/>
            <person name="Pearson B.M."/>
            <person name="Perrin A."/>
            <person name="Pettersson B."/>
            <person name="Poch O."/>
            <person name="Pohl T.M."/>
            <person name="Poirey R."/>
            <person name="Portetelle D."/>
            <person name="Pujol A."/>
            <person name="Purnelle B."/>
            <person name="Ramezani Rad M."/>
            <person name="Rechmann S."/>
            <person name="Schwager C."/>
            <person name="Schweizer M."/>
            <person name="Sor F."/>
            <person name="Sterky F."/>
            <person name="Tarassov I.A."/>
            <person name="Teodoru C."/>
            <person name="Tettelin H."/>
            <person name="Thierry A."/>
            <person name="Tobiasch E."/>
            <person name="Tzermia M."/>
            <person name="Uhlen M."/>
            <person name="Unseld M."/>
            <person name="Valens M."/>
            <person name="Vandenbol M."/>
            <person name="Vetter I."/>
            <person name="Vlcek C."/>
            <person name="Voet M."/>
            <person name="Volckaert G."/>
            <person name="Voss H."/>
            <person name="Wambutt R."/>
            <person name="Wedler H."/>
            <person name="Wiemann S."/>
            <person name="Winsor B."/>
            <person name="Wolfe K.H."/>
            <person name="Zollner A."/>
            <person name="Zumstein E."/>
            <person name="Kleine K."/>
        </authorList>
    </citation>
    <scope>NUCLEOTIDE SEQUENCE [LARGE SCALE GENOMIC DNA]</scope>
    <source>
        <strain>ATCC 204508 / S288c</strain>
    </source>
</reference>
<reference key="4">
    <citation type="journal article" date="2014" name="G3 (Bethesda)">
        <title>The reference genome sequence of Saccharomyces cerevisiae: Then and now.</title>
        <authorList>
            <person name="Engel S.R."/>
            <person name="Dietrich F.S."/>
            <person name="Fisk D.G."/>
            <person name="Binkley G."/>
            <person name="Balakrishnan R."/>
            <person name="Costanzo M.C."/>
            <person name="Dwight S.S."/>
            <person name="Hitz B.C."/>
            <person name="Karra K."/>
            <person name="Nash R.S."/>
            <person name="Weng S."/>
            <person name="Wong E.D."/>
            <person name="Lloyd P."/>
            <person name="Skrzypek M.S."/>
            <person name="Miyasato S.R."/>
            <person name="Simison M."/>
            <person name="Cherry J.M."/>
        </authorList>
    </citation>
    <scope>GENOME REANNOTATION</scope>
    <source>
        <strain>ATCC 204508 / S288c</strain>
    </source>
</reference>
<reference key="5">
    <citation type="journal article" date="1998" name="J. Biol. Chem.">
        <title>Defects in the yeast high affinity iron transport system result in increased metal sensitivity because of the increased expression of transporters with a broad transition metal specificity.</title>
        <authorList>
            <person name="Li L."/>
            <person name="Kaplan J."/>
        </authorList>
    </citation>
    <scope>FUNCTION</scope>
    <scope>SUBCELLULAR LOCATION</scope>
</reference>
<reference key="6">
    <citation type="journal article" date="2000" name="EMBO J.">
        <title>Zinc transporters that regulate vacuolar zinc storage in Saccharomyces cerevisiae.</title>
        <authorList>
            <person name="MacDiarmid C.W."/>
            <person name="Gaither L.A."/>
            <person name="Eide D."/>
        </authorList>
    </citation>
    <scope>FUNCTION</scope>
    <scope>DISRUPTION PHENOTYPE</scope>
</reference>
<reference key="7">
    <citation type="journal article" date="2003" name="J. Biol. Chem.">
        <title>Induction of the ZRC1 metal tolerance gene in zinc-limited yeast confers resistance to zinc shock.</title>
        <authorList>
            <person name="MacDiarmid C.W."/>
            <person name="Milanick M.A."/>
            <person name="Eide D.J."/>
        </authorList>
    </citation>
    <scope>FUNCTION</scope>
</reference>
<reference key="8">
    <citation type="journal article" date="2003" name="Nature">
        <title>Global analysis of protein expression in yeast.</title>
        <authorList>
            <person name="Ghaemmaghami S."/>
            <person name="Huh W.-K."/>
            <person name="Bower K."/>
            <person name="Howson R.W."/>
            <person name="Belle A."/>
            <person name="Dephoure N."/>
            <person name="O'Shea E.K."/>
            <person name="Weissman J.S."/>
        </authorList>
    </citation>
    <scope>LEVEL OF PROTEIN EXPRESSION [LARGE SCALE ANALYSIS]</scope>
</reference>
<reference key="9">
    <citation type="journal article" date="2003" name="Proc. Natl. Acad. Sci. U.S.A.">
        <title>A subset of membrane-associated proteins is ubiquitinated in response to mutations in the endoplasmic reticulum degradation machinery.</title>
        <authorList>
            <person name="Hitchcock A.L."/>
            <person name="Auld K."/>
            <person name="Gygi S.P."/>
            <person name="Silver P.A."/>
        </authorList>
    </citation>
    <scope>UBIQUITINATION [LARGE SCALE ANALYSIS] AT LYS-301</scope>
    <scope>IDENTIFICATION BY MASS SPECTROMETRY</scope>
</reference>
<reference key="10">
    <citation type="journal article" date="2005" name="Genome Res.">
        <title>The Yeast Gene Order Browser: combining curated homology and syntenic context reveals gene fate in polyploid species.</title>
        <authorList>
            <person name="Byrne K.P."/>
            <person name="Wolfe K.H."/>
        </authorList>
    </citation>
    <scope>IDENTIFIGATION OF PARALOGS</scope>
</reference>
<reference key="11">
    <citation type="journal article" date="2007" name="Proc. Natl. Acad. Sci. U.S.A.">
        <title>Analysis of phosphorylation sites on proteins from Saccharomyces cerevisiae by electron transfer dissociation (ETD) mass spectrometry.</title>
        <authorList>
            <person name="Chi A."/>
            <person name="Huttenhower C."/>
            <person name="Geer L.Y."/>
            <person name="Coon J.J."/>
            <person name="Syka J.E.P."/>
            <person name="Bai D.L."/>
            <person name="Shabanowitz J."/>
            <person name="Burke D.J."/>
            <person name="Troyanskaya O.G."/>
            <person name="Hunt D.F."/>
        </authorList>
    </citation>
    <scope>PHOSPHORYLATION [LARGE SCALE ANALYSIS] AT SER-225</scope>
    <scope>IDENTIFICATION BY MASS SPECTROMETRY [LARGE SCALE ANALYSIS]</scope>
</reference>
<reference key="12">
    <citation type="journal article" date="2008" name="J. Biol. Chem.">
        <title>A single amino acid change in the yeast vacuolar metal transporters ZRC1 and COT1 alters their substrate specificity.</title>
        <authorList>
            <person name="Lin H."/>
            <person name="Kumanovics A."/>
            <person name="Nelson J.M."/>
            <person name="Warner D.E."/>
            <person name="Ward D.M."/>
            <person name="Kaplan J."/>
        </authorList>
    </citation>
    <scope>FUNCTION</scope>
    <scope>MUTAGENESIS OF ASN-45</scope>
</reference>
<reference key="13">
    <citation type="journal article" date="2009" name="Science">
        <title>Global analysis of Cdk1 substrate phosphorylation sites provides insights into evolution.</title>
        <authorList>
            <person name="Holt L.J."/>
            <person name="Tuch B.B."/>
            <person name="Villen J."/>
            <person name="Johnson A.D."/>
            <person name="Gygi S.P."/>
            <person name="Morgan D.O."/>
        </authorList>
    </citation>
    <scope>IDENTIFICATION BY MASS SPECTROMETRY [LARGE SCALE ANALYSIS]</scope>
</reference>
<reference key="14">
    <citation type="journal article" date="2012" name="Nat. Cell Biol.">
        <title>Dissecting DNA damage response pathways by analysing protein localization and abundance changes during DNA replication stress.</title>
        <authorList>
            <person name="Tkach J.M."/>
            <person name="Yimit A."/>
            <person name="Lee A.Y."/>
            <person name="Riffle M."/>
            <person name="Costanzo M."/>
            <person name="Jaschob D."/>
            <person name="Hendry J.A."/>
            <person name="Ou J."/>
            <person name="Moffat J."/>
            <person name="Boone C."/>
            <person name="Davis T.N."/>
            <person name="Nislow C."/>
            <person name="Brown G.W."/>
        </authorList>
    </citation>
    <scope>INDUCTION</scope>
</reference>
<reference key="15">
    <citation type="journal article" date="2022" name="J. Cell Biol.">
        <title>A lysosomal biogenesis map reveals the cargo spectrum of yeast vacuolar protein targeting pathways.</title>
        <authorList>
            <person name="Eising S."/>
            <person name="Esch B."/>
            <person name="Waelte M."/>
            <person name="Vargas Duarte P."/>
            <person name="Walter S."/>
            <person name="Ungermann C."/>
            <person name="Bohnert M."/>
            <person name="Froehlich F."/>
        </authorList>
    </citation>
    <scope>SUBCELLULAR LOCATION</scope>
</reference>
<dbReference type="EMBL" id="M88252">
    <property type="protein sequence ID" value="AAA74884.1"/>
    <property type="molecule type" value="Genomic_DNA"/>
</dbReference>
<dbReference type="EMBL" id="X90565">
    <property type="protein sequence ID" value="CAA62171.1"/>
    <property type="molecule type" value="Genomic_DNA"/>
</dbReference>
<dbReference type="EMBL" id="Z75224">
    <property type="protein sequence ID" value="CAA99636.1"/>
    <property type="molecule type" value="Genomic_DNA"/>
</dbReference>
<dbReference type="EMBL" id="BK006948">
    <property type="protein sequence ID" value="DAA11080.1"/>
    <property type="molecule type" value="Genomic_DNA"/>
</dbReference>
<dbReference type="PIR" id="S58327">
    <property type="entry name" value="S58327"/>
</dbReference>
<dbReference type="RefSeq" id="NP_014961.3">
    <property type="nucleotide sequence ID" value="NM_001183736.3"/>
</dbReference>
<dbReference type="SMR" id="P32798"/>
<dbReference type="BioGRID" id="34703">
    <property type="interactions" value="54"/>
</dbReference>
<dbReference type="DIP" id="DIP-7554N"/>
<dbReference type="FunCoup" id="P32798">
    <property type="interactions" value="219"/>
</dbReference>
<dbReference type="IntAct" id="P32798">
    <property type="interactions" value="23"/>
</dbReference>
<dbReference type="MINT" id="P32798"/>
<dbReference type="STRING" id="4932.YOR316C"/>
<dbReference type="TCDB" id="2.A.4.2.1">
    <property type="family name" value="the cation diffusion facilitator (cdf) family"/>
</dbReference>
<dbReference type="iPTMnet" id="P32798"/>
<dbReference type="PaxDb" id="4932-YOR316C"/>
<dbReference type="PeptideAtlas" id="P32798"/>
<dbReference type="TopDownProteomics" id="P32798"/>
<dbReference type="EnsemblFungi" id="YOR316C_mRNA">
    <property type="protein sequence ID" value="YOR316C"/>
    <property type="gene ID" value="YOR316C"/>
</dbReference>
<dbReference type="GeneID" id="854494"/>
<dbReference type="KEGG" id="sce:YOR316C"/>
<dbReference type="AGR" id="SGD:S000005843"/>
<dbReference type="SGD" id="S000005843">
    <property type="gene designation" value="COT1"/>
</dbReference>
<dbReference type="VEuPathDB" id="FungiDB:YOR316C"/>
<dbReference type="eggNOG" id="KOG1483">
    <property type="taxonomic scope" value="Eukaryota"/>
</dbReference>
<dbReference type="GeneTree" id="ENSGT00940000172026"/>
<dbReference type="HOGENOM" id="CLU_013430_4_3_1"/>
<dbReference type="InParanoid" id="P32798"/>
<dbReference type="OMA" id="FQDCASW"/>
<dbReference type="OrthoDB" id="9944568at2759"/>
<dbReference type="BioCyc" id="YEAST:G3O-33798-MONOMER"/>
<dbReference type="Reactome" id="R-SCE-425410">
    <property type="pathway name" value="Metal ion SLC transporters"/>
</dbReference>
<dbReference type="BioGRID-ORCS" id="854494">
    <property type="hits" value="6 hits in 10 CRISPR screens"/>
</dbReference>
<dbReference type="PRO" id="PR:P32798"/>
<dbReference type="Proteomes" id="UP000002311">
    <property type="component" value="Chromosome XV"/>
</dbReference>
<dbReference type="RNAct" id="P32798">
    <property type="molecule type" value="protein"/>
</dbReference>
<dbReference type="GO" id="GO:0000324">
    <property type="term" value="C:fungal-type vacuole"/>
    <property type="evidence" value="ECO:0000314"/>
    <property type="project" value="SGD"/>
</dbReference>
<dbReference type="GO" id="GO:0000329">
    <property type="term" value="C:fungal-type vacuole membrane"/>
    <property type="evidence" value="ECO:0000314"/>
    <property type="project" value="SGD"/>
</dbReference>
<dbReference type="GO" id="GO:0045121">
    <property type="term" value="C:membrane raft"/>
    <property type="evidence" value="ECO:0000314"/>
    <property type="project" value="SGD"/>
</dbReference>
<dbReference type="GO" id="GO:0005739">
    <property type="term" value="C:mitochondrion"/>
    <property type="evidence" value="ECO:0007005"/>
    <property type="project" value="SGD"/>
</dbReference>
<dbReference type="GO" id="GO:0015087">
    <property type="term" value="F:cobalt ion transmembrane transporter activity"/>
    <property type="evidence" value="ECO:0000315"/>
    <property type="project" value="SGD"/>
</dbReference>
<dbReference type="GO" id="GO:0005385">
    <property type="term" value="F:zinc ion transmembrane transporter activity"/>
    <property type="evidence" value="ECO:0000316"/>
    <property type="project" value="SGD"/>
</dbReference>
<dbReference type="GO" id="GO:0006824">
    <property type="term" value="P:cobalt ion transport"/>
    <property type="evidence" value="ECO:0000315"/>
    <property type="project" value="SGD"/>
</dbReference>
<dbReference type="GO" id="GO:0006882">
    <property type="term" value="P:intracellular zinc ion homeostasis"/>
    <property type="evidence" value="ECO:0000315"/>
    <property type="project" value="SGD"/>
</dbReference>
<dbReference type="GO" id="GO:0071577">
    <property type="term" value="P:zinc ion transmembrane transport"/>
    <property type="evidence" value="ECO:0000318"/>
    <property type="project" value="GO_Central"/>
</dbReference>
<dbReference type="GO" id="GO:0006829">
    <property type="term" value="P:zinc ion transport"/>
    <property type="evidence" value="ECO:0000316"/>
    <property type="project" value="SGD"/>
</dbReference>
<dbReference type="FunFam" id="1.20.1510.10:FF:000024">
    <property type="entry name" value="Solute carrier family 30 (Zinc transporter), member 1"/>
    <property type="match status" value="1"/>
</dbReference>
<dbReference type="FunFam" id="1.20.1510.10:FF:000029">
    <property type="entry name" value="Zinc transporter 7"/>
    <property type="match status" value="1"/>
</dbReference>
<dbReference type="Gene3D" id="1.20.1510.10">
    <property type="entry name" value="Cation efflux protein transmembrane domain"/>
    <property type="match status" value="2"/>
</dbReference>
<dbReference type="InterPro" id="IPR002524">
    <property type="entry name" value="Cation_efflux"/>
</dbReference>
<dbReference type="InterPro" id="IPR036837">
    <property type="entry name" value="Cation_efflux_CTD_sf"/>
</dbReference>
<dbReference type="InterPro" id="IPR027469">
    <property type="entry name" value="Cation_efflux_TMD_sf"/>
</dbReference>
<dbReference type="NCBIfam" id="TIGR01297">
    <property type="entry name" value="CDF"/>
    <property type="match status" value="1"/>
</dbReference>
<dbReference type="PANTHER" id="PTHR45820">
    <property type="entry name" value="FI23527P1"/>
    <property type="match status" value="1"/>
</dbReference>
<dbReference type="PANTHER" id="PTHR45820:SF4">
    <property type="entry name" value="ZINC TRANSPORTER 63C, ISOFORM F"/>
    <property type="match status" value="1"/>
</dbReference>
<dbReference type="Pfam" id="PF01545">
    <property type="entry name" value="Cation_efflux"/>
    <property type="match status" value="1"/>
</dbReference>
<dbReference type="SUPFAM" id="SSF160240">
    <property type="entry name" value="Cation efflux protein cytoplasmic domain-like"/>
    <property type="match status" value="1"/>
</dbReference>
<dbReference type="SUPFAM" id="SSF161111">
    <property type="entry name" value="Cation efflux protein transmembrane domain-like"/>
    <property type="match status" value="1"/>
</dbReference>
<sequence>MKLGSKQVKIISLLLLDTVFFGIEITTGYLSHSLALIADSFHMLNDIISLVVALWAVNVAKNRNPDSTYTYGWKRAEILGALINAVFLIALCVSILIEALQRIIAPPVIENPKFVLYVGVAGLISNTVGLFLFHDNDQEHGHGHGHSHGGIFADHEMHMPSSHTHTHAHVDGIENTTPMDSTDNISEIMPNAIVDSFMNENTRLLTPENASKTPSYSTSSHTIASGGNYTEHNKRKRSLNMHGVFLHVLGDALGNIGVMLSAFFIWKTDYSWKYYTDPLVSLIITGIIFSSALPLSCKASKILLQATPSTLSGDQVEGDLLKIPGIIAIHDFHIWNLTESIFIASLHIQLDISPEQFTDLAKIVRSKLHRYGIHSATLQPEFITREVTSTERAGDSQGDHLQNDPLSLRPKTYGTGISGSTCLIDDAANCNTADCLEDH</sequence>
<feature type="chain" id="PRO_0000206102" description="Vacuolar zinc transporter COT1">
    <location>
        <begin position="1"/>
        <end position="439"/>
    </location>
</feature>
<feature type="topological domain" description="Cytoplasmic" evidence="16">
    <location>
        <begin position="1"/>
        <end position="9"/>
    </location>
</feature>
<feature type="transmembrane region" description="Helical" evidence="2">
    <location>
        <begin position="10"/>
        <end position="30"/>
    </location>
</feature>
<feature type="topological domain" description="Vacuolar" evidence="16">
    <location>
        <begin position="31"/>
        <end position="33"/>
    </location>
</feature>
<feature type="transmembrane region" description="Helical" evidence="2">
    <location>
        <begin position="34"/>
        <end position="54"/>
    </location>
</feature>
<feature type="topological domain" description="Cytoplasmic" evidence="16">
    <location>
        <begin position="55"/>
        <end position="76"/>
    </location>
</feature>
<feature type="transmembrane region" description="Helical" evidence="2">
    <location>
        <begin position="77"/>
        <end position="97"/>
    </location>
</feature>
<feature type="topological domain" description="Vacuolar" evidence="16">
    <location>
        <begin position="98"/>
        <end position="113"/>
    </location>
</feature>
<feature type="transmembrane region" description="Helical" evidence="2">
    <location>
        <begin position="114"/>
        <end position="134"/>
    </location>
</feature>
<feature type="topological domain" description="Cytoplasmic" evidence="16">
    <location>
        <begin position="135"/>
        <end position="244"/>
    </location>
</feature>
<feature type="transmembrane region" description="Helical" evidence="2">
    <location>
        <begin position="245"/>
        <end position="265"/>
    </location>
</feature>
<feature type="topological domain" description="Vacuolar" evidence="16">
    <location>
        <begin position="266"/>
        <end position="274"/>
    </location>
</feature>
<feature type="transmembrane region" description="Helical" evidence="2">
    <location>
        <begin position="275"/>
        <end position="295"/>
    </location>
</feature>
<feature type="topological domain" description="Cytoplasmic" evidence="16">
    <location>
        <begin position="296"/>
        <end position="439"/>
    </location>
</feature>
<feature type="region of interest" description="Disordered" evidence="3">
    <location>
        <begin position="207"/>
        <end position="231"/>
    </location>
</feature>
<feature type="region of interest" description="Disordered" evidence="3">
    <location>
        <begin position="388"/>
        <end position="408"/>
    </location>
</feature>
<feature type="short sequence motif" description="Histidine repeat 1" evidence="1">
    <location>
        <begin position="140"/>
        <end position="144"/>
    </location>
</feature>
<feature type="short sequence motif" description="Histidine repeat 2" evidence="1">
    <location>
        <begin position="165"/>
        <end position="169"/>
    </location>
</feature>
<feature type="short sequence motif" description="Histidine repeat 3" evidence="1">
    <location>
        <begin position="219"/>
        <end position="223"/>
    </location>
</feature>
<feature type="compositionally biased region" description="Polar residues" evidence="3">
    <location>
        <begin position="207"/>
        <end position="230"/>
    </location>
</feature>
<feature type="compositionally biased region" description="Basic and acidic residues" evidence="3">
    <location>
        <begin position="388"/>
        <end position="402"/>
    </location>
</feature>
<feature type="modified residue" description="Phosphoserine" evidence="18">
    <location>
        <position position="225"/>
    </location>
</feature>
<feature type="cross-link" description="Glycyl lysine isopeptide (Lys-Gly) (interchain with G-Cter in ubiquitin)" evidence="6">
    <location>
        <position position="301"/>
    </location>
</feature>
<feature type="mutagenesis site" description="Increases ability to transport iron and decreases ability to transport cobalt." evidence="10">
    <original>N</original>
    <variation>I</variation>
    <location>
        <position position="45"/>
    </location>
</feature>
<feature type="sequence conflict" description="In Ref. 1; AAA74884." evidence="16" ref="1">
    <original>G</original>
    <variation>E</variation>
    <location>
        <position position="227"/>
    </location>
</feature>
<feature type="sequence conflict" description="In Ref. 1; AAA74884." evidence="16" ref="1">
    <original>HI</original>
    <variation>RV</variation>
    <location>
        <begin position="333"/>
        <end position="334"/>
    </location>
</feature>
<feature type="sequence conflict" description="In Ref. 1; AAA74884." evidence="16" ref="1">
    <original>I</original>
    <variation>V</variation>
    <location>
        <position position="424"/>
    </location>
</feature>
<accession>P32798</accession>
<accession>D6W314</accession>
<gene>
    <name evidence="14" type="primary">COT1</name>
    <name type="ordered locus">YOR316C</name>
    <name type="ORF">O6131</name>
</gene>
<keyword id="KW-0170">Cobalt</keyword>
<keyword id="KW-1017">Isopeptide bond</keyword>
<keyword id="KW-0472">Membrane</keyword>
<keyword id="KW-0597">Phosphoprotein</keyword>
<keyword id="KW-1185">Reference proteome</keyword>
<keyword id="KW-0677">Repeat</keyword>
<keyword id="KW-0812">Transmembrane</keyword>
<keyword id="KW-1133">Transmembrane helix</keyword>
<keyword id="KW-0813">Transport</keyword>
<keyword id="KW-0832">Ubl conjugation</keyword>
<keyword id="KW-0926">Vacuole</keyword>
<keyword id="KW-0862">Zinc</keyword>
<comment type="function">
    <text evidence="4 5 8 10 13">Vacuolar transporter that regulates zinc homeostasis by mediating zinc transport and storage into the vacuole (PubMed:10856230, PubMed:12556516, PubMed:9712830). Plays a role in resistance to zinc shock resulting from sudden influx of zinc into cytoplasm (PubMed:12556516). May also participate in the regulation of cobalt levels under normal physiological conditions and may be important in the supply of metal that is required for metalloenzyme or cofactor synthesis (PubMed:1508175, PubMed:18930916). Involved in the resistance to cobalt and rhodium ions (PubMed:1508175).</text>
</comment>
<comment type="catalytic activity">
    <reaction evidence="17">
        <text>Zn(2+)(in) = Zn(2+)(out)</text>
        <dbReference type="Rhea" id="RHEA:29351"/>
        <dbReference type="ChEBI" id="CHEBI:29105"/>
    </reaction>
    <physiologicalReaction direction="left-to-right" evidence="17">
        <dbReference type="Rhea" id="RHEA:29352"/>
    </physiologicalReaction>
</comment>
<comment type="interaction">
    <interactant intactId="EBI-5006">
        <id>P32798</id>
    </interactant>
    <interactant intactId="EBI-20959">
        <id>P38310</id>
        <label>FTH1</label>
    </interactant>
    <organismsDiffer>false</organismsDiffer>
    <experiments>3</experiments>
</comment>
<comment type="subcellular location">
    <subcellularLocation>
        <location evidence="12 13">Vacuole membrane</location>
        <topology evidence="2">Multi-pass membrane protein</topology>
    </subcellularLocation>
    <text evidence="12">Targeted to vacuole membrane via the AP-3 pathway.</text>
</comment>
<comment type="induction">
    <text evidence="11">Expression is increased in response to DNA replication stress.</text>
</comment>
<comment type="domain">
    <text evidence="1">Contains 3 histidine repeat motifs between the 4th and 5th transmembrane, exposed to the cytoplasm, that may be involved in the binding site of zinc.</text>
</comment>
<comment type="disruption phenotype">
    <text evidence="4">Reduces zinc transport into the vacuole and hence limit the over-accumulation of zinc caused by the deletion of ZRT3.</text>
</comment>
<comment type="miscellaneous">
    <text evidence="7">Present with 2070 molecules/cell in log phase SD medium.</text>
</comment>
<comment type="miscellaneous">
    <text evidence="9">COT1 has a paralog, ZRC1, that arose from the whole genome duplication.</text>
</comment>
<comment type="similarity">
    <text evidence="16">Belongs to the cation diffusion facilitator (CDF) transporter (TC 2.A.4) family. SLC30A subfamily.</text>
</comment>